<evidence type="ECO:0000269" key="1">
    <source>
    </source>
</evidence>
<evidence type="ECO:0000305" key="2"/>
<dbReference type="PIR" id="JS0424">
    <property type="entry name" value="JS0424"/>
</dbReference>
<dbReference type="GO" id="GO:0005576">
    <property type="term" value="C:extracellular region"/>
    <property type="evidence" value="ECO:0007669"/>
    <property type="project" value="UniProtKB-SubCell"/>
</dbReference>
<dbReference type="GO" id="GO:0005179">
    <property type="term" value="F:hormone activity"/>
    <property type="evidence" value="ECO:0007669"/>
    <property type="project" value="UniProtKB-KW"/>
</dbReference>
<dbReference type="GO" id="GO:0097746">
    <property type="term" value="P:blood vessel diameter maintenance"/>
    <property type="evidence" value="ECO:0007669"/>
    <property type="project" value="InterPro"/>
</dbReference>
<dbReference type="GO" id="GO:0008217">
    <property type="term" value="P:regulation of blood pressure"/>
    <property type="evidence" value="ECO:0007669"/>
    <property type="project" value="InterPro"/>
</dbReference>
<dbReference type="InterPro" id="IPR001483">
    <property type="entry name" value="Urotensin_II"/>
</dbReference>
<dbReference type="Pfam" id="PF02083">
    <property type="entry name" value="Urotensin_II"/>
    <property type="match status" value="1"/>
</dbReference>
<dbReference type="PROSITE" id="PS00984">
    <property type="entry name" value="UROTENSIN_II"/>
    <property type="match status" value="1"/>
</dbReference>
<reference key="1">
    <citation type="journal article" date="1983" name="Peptides">
        <title>Isolation and amino acid sequence of two urotensin II peptides from Catostomus commersoni urophyses.</title>
        <authorList>
            <person name="McMaster D."/>
            <person name="Lederis K."/>
        </authorList>
    </citation>
    <scope>PROTEIN SEQUENCE</scope>
</reference>
<name>UTS2B_CATCO</name>
<proteinExistence type="evidence at protein level"/>
<organism>
    <name type="scientific">Catostomus commersonii</name>
    <name type="common">White sucker</name>
    <name type="synonym">Cyprinus commersonnii</name>
    <dbReference type="NCBI Taxonomy" id="7971"/>
    <lineage>
        <taxon>Eukaryota</taxon>
        <taxon>Metazoa</taxon>
        <taxon>Chordata</taxon>
        <taxon>Craniata</taxon>
        <taxon>Vertebrata</taxon>
        <taxon>Euteleostomi</taxon>
        <taxon>Actinopterygii</taxon>
        <taxon>Neopterygii</taxon>
        <taxon>Teleostei</taxon>
        <taxon>Ostariophysi</taxon>
        <taxon>Cypriniformes</taxon>
        <taxon>Catostomoidei</taxon>
        <taxon>Catostomidae</taxon>
        <taxon>Catostomus</taxon>
    </lineage>
</organism>
<protein>
    <recommendedName>
        <fullName>Urotensin-2B</fullName>
    </recommendedName>
    <alternativeName>
        <fullName>Urotensin IIB</fullName>
        <shortName>U-IIB</shortName>
        <shortName>UIIB</shortName>
    </alternativeName>
</protein>
<comment type="function">
    <text>Urotensin is found in the teleost caudal neurosecretory system. It has a suggested role in osmoregulation and as a corticotropin-releasing factor.</text>
</comment>
<comment type="subcellular location">
    <subcellularLocation>
        <location>Secreted</location>
    </subcellularLocation>
</comment>
<comment type="similarity">
    <text evidence="2">Belongs to the urotensin-2 family.</text>
</comment>
<accession>P04559</accession>
<keyword id="KW-0903">Direct protein sequencing</keyword>
<keyword id="KW-1015">Disulfide bond</keyword>
<keyword id="KW-0372">Hormone</keyword>
<keyword id="KW-0964">Secreted</keyword>
<sequence>GSNTECFWKYCV</sequence>
<feature type="peptide" id="PRO_0000044566" description="Urotensin-2B">
    <location>
        <begin position="1"/>
        <end position="12"/>
    </location>
</feature>
<feature type="disulfide bond" evidence="1">
    <location>
        <begin position="6"/>
        <end position="11"/>
    </location>
</feature>